<comment type="function">
    <text evidence="1">Catalyzes the condensation of carbamoyl phosphate and aspartate to form carbamoyl aspartate and inorganic phosphate, the committed step in the de novo pyrimidine nucleotide biosynthesis pathway.</text>
</comment>
<comment type="catalytic activity">
    <reaction evidence="1">
        <text>carbamoyl phosphate + L-aspartate = N-carbamoyl-L-aspartate + phosphate + H(+)</text>
        <dbReference type="Rhea" id="RHEA:20013"/>
        <dbReference type="ChEBI" id="CHEBI:15378"/>
        <dbReference type="ChEBI" id="CHEBI:29991"/>
        <dbReference type="ChEBI" id="CHEBI:32814"/>
        <dbReference type="ChEBI" id="CHEBI:43474"/>
        <dbReference type="ChEBI" id="CHEBI:58228"/>
        <dbReference type="EC" id="2.1.3.2"/>
    </reaction>
</comment>
<comment type="pathway">
    <text evidence="1">Pyrimidine metabolism; UMP biosynthesis via de novo pathway; (S)-dihydroorotate from bicarbonate: step 2/3.</text>
</comment>
<comment type="subunit">
    <text evidence="1">Heterododecamer (2C3:3R2) of six catalytic PyrB chains organized as two trimers (C3), and six regulatory PyrI chains organized as three dimers (R2).</text>
</comment>
<comment type="similarity">
    <text evidence="1">Belongs to the aspartate/ornithine carbamoyltransferase superfamily. ATCase family.</text>
</comment>
<protein>
    <recommendedName>
        <fullName evidence="1">Aspartate carbamoyltransferase catalytic subunit</fullName>
        <ecNumber evidence="1">2.1.3.2</ecNumber>
    </recommendedName>
    <alternativeName>
        <fullName evidence="1">Aspartate transcarbamylase</fullName>
        <shortName evidence="1">ATCase</shortName>
    </alternativeName>
</protein>
<gene>
    <name evidence="1" type="primary">pyrB</name>
    <name type="ordered locus">BT_0742</name>
</gene>
<sequence>MENRSLVTIAEHSKEKILYMLEMAKQFEMNPNRRLLQGKVVATLFFEPSTRTRLSFETAANRLGARVIGFTDPKATSSSKGETLKDTIMMVSSYADIIVMRHYLEGAARYASEVAPVPIVNAGDGANQHPSQTMLDLYSIYKTQGTLENLNIFLVGDLKYGRTVHSLLMAMRHFNPTFHFIAPDELKMPEEYKLYCKEHQIKYIEHTEFTEEIIADADILYMTRVQRERFTDLMEYERVKNVYILRNKMLENTRPNLRILHPLPRVNEIAYDVDNNPKAYYFQQAQNGLYAREAILCDVLGITLEDVKNDILL</sequence>
<proteinExistence type="inferred from homology"/>
<name>PYRB_BACTN</name>
<evidence type="ECO:0000255" key="1">
    <source>
        <dbReference type="HAMAP-Rule" id="MF_00001"/>
    </source>
</evidence>
<feature type="chain" id="PRO_0000113100" description="Aspartate carbamoyltransferase catalytic subunit">
    <location>
        <begin position="1"/>
        <end position="313"/>
    </location>
</feature>
<feature type="binding site" evidence="1">
    <location>
        <position position="51"/>
    </location>
    <ligand>
        <name>carbamoyl phosphate</name>
        <dbReference type="ChEBI" id="CHEBI:58228"/>
    </ligand>
</feature>
<feature type="binding site" evidence="1">
    <location>
        <position position="52"/>
    </location>
    <ligand>
        <name>carbamoyl phosphate</name>
        <dbReference type="ChEBI" id="CHEBI:58228"/>
    </ligand>
</feature>
<feature type="binding site" evidence="1">
    <location>
        <position position="80"/>
    </location>
    <ligand>
        <name>L-aspartate</name>
        <dbReference type="ChEBI" id="CHEBI:29991"/>
    </ligand>
</feature>
<feature type="binding site" evidence="1">
    <location>
        <position position="101"/>
    </location>
    <ligand>
        <name>carbamoyl phosphate</name>
        <dbReference type="ChEBI" id="CHEBI:58228"/>
    </ligand>
</feature>
<feature type="binding site" evidence="1">
    <location>
        <position position="129"/>
    </location>
    <ligand>
        <name>carbamoyl phosphate</name>
        <dbReference type="ChEBI" id="CHEBI:58228"/>
    </ligand>
</feature>
<feature type="binding site" evidence="1">
    <location>
        <position position="132"/>
    </location>
    <ligand>
        <name>carbamoyl phosphate</name>
        <dbReference type="ChEBI" id="CHEBI:58228"/>
    </ligand>
</feature>
<feature type="binding site" evidence="1">
    <location>
        <position position="162"/>
    </location>
    <ligand>
        <name>L-aspartate</name>
        <dbReference type="ChEBI" id="CHEBI:29991"/>
    </ligand>
</feature>
<feature type="binding site" evidence="1">
    <location>
        <position position="224"/>
    </location>
    <ligand>
        <name>L-aspartate</name>
        <dbReference type="ChEBI" id="CHEBI:29991"/>
    </ligand>
</feature>
<feature type="binding site" evidence="1">
    <location>
        <position position="263"/>
    </location>
    <ligand>
        <name>carbamoyl phosphate</name>
        <dbReference type="ChEBI" id="CHEBI:58228"/>
    </ligand>
</feature>
<feature type="binding site" evidence="1">
    <location>
        <position position="264"/>
    </location>
    <ligand>
        <name>carbamoyl phosphate</name>
        <dbReference type="ChEBI" id="CHEBI:58228"/>
    </ligand>
</feature>
<reference key="1">
    <citation type="journal article" date="2003" name="Science">
        <title>A genomic view of the human-Bacteroides thetaiotaomicron symbiosis.</title>
        <authorList>
            <person name="Xu J."/>
            <person name="Bjursell M.K."/>
            <person name="Himrod J."/>
            <person name="Deng S."/>
            <person name="Carmichael L.K."/>
            <person name="Chiang H.C."/>
            <person name="Hooper L.V."/>
            <person name="Gordon J.I."/>
        </authorList>
    </citation>
    <scope>NUCLEOTIDE SEQUENCE [LARGE SCALE GENOMIC DNA]</scope>
    <source>
        <strain>ATCC 29148 / DSM 2079 / JCM 5827 / CCUG 10774 / NCTC 10582 / VPI-5482 / E50</strain>
    </source>
</reference>
<organism>
    <name type="scientific">Bacteroides thetaiotaomicron (strain ATCC 29148 / DSM 2079 / JCM 5827 / CCUG 10774 / NCTC 10582 / VPI-5482 / E50)</name>
    <dbReference type="NCBI Taxonomy" id="226186"/>
    <lineage>
        <taxon>Bacteria</taxon>
        <taxon>Pseudomonadati</taxon>
        <taxon>Bacteroidota</taxon>
        <taxon>Bacteroidia</taxon>
        <taxon>Bacteroidales</taxon>
        <taxon>Bacteroidaceae</taxon>
        <taxon>Bacteroides</taxon>
    </lineage>
</organism>
<accession>Q8A9S3</accession>
<dbReference type="EC" id="2.1.3.2" evidence="1"/>
<dbReference type="EMBL" id="AE015928">
    <property type="protein sequence ID" value="AAO75849.1"/>
    <property type="molecule type" value="Genomic_DNA"/>
</dbReference>
<dbReference type="RefSeq" id="NP_809655.1">
    <property type="nucleotide sequence ID" value="NC_004663.1"/>
</dbReference>
<dbReference type="RefSeq" id="WP_008761416.1">
    <property type="nucleotide sequence ID" value="NZ_UYXG01000002.1"/>
</dbReference>
<dbReference type="SMR" id="Q8A9S3"/>
<dbReference type="FunCoup" id="Q8A9S3">
    <property type="interactions" value="523"/>
</dbReference>
<dbReference type="STRING" id="226186.BT_0742"/>
<dbReference type="PaxDb" id="226186-BT_0742"/>
<dbReference type="EnsemblBacteria" id="AAO75849">
    <property type="protein sequence ID" value="AAO75849"/>
    <property type="gene ID" value="BT_0742"/>
</dbReference>
<dbReference type="GeneID" id="69590225"/>
<dbReference type="KEGG" id="bth:BT_0742"/>
<dbReference type="PATRIC" id="fig|226186.12.peg.757"/>
<dbReference type="eggNOG" id="COG0540">
    <property type="taxonomic scope" value="Bacteria"/>
</dbReference>
<dbReference type="HOGENOM" id="CLU_043846_1_2_10"/>
<dbReference type="InParanoid" id="Q8A9S3"/>
<dbReference type="OrthoDB" id="9774690at2"/>
<dbReference type="UniPathway" id="UPA00070">
    <property type="reaction ID" value="UER00116"/>
</dbReference>
<dbReference type="Proteomes" id="UP000001414">
    <property type="component" value="Chromosome"/>
</dbReference>
<dbReference type="GO" id="GO:0016597">
    <property type="term" value="F:amino acid binding"/>
    <property type="evidence" value="ECO:0007669"/>
    <property type="project" value="InterPro"/>
</dbReference>
<dbReference type="GO" id="GO:0004070">
    <property type="term" value="F:aspartate carbamoyltransferase activity"/>
    <property type="evidence" value="ECO:0007669"/>
    <property type="project" value="UniProtKB-UniRule"/>
</dbReference>
<dbReference type="GO" id="GO:0006207">
    <property type="term" value="P:'de novo' pyrimidine nucleobase biosynthetic process"/>
    <property type="evidence" value="ECO:0007669"/>
    <property type="project" value="InterPro"/>
</dbReference>
<dbReference type="GO" id="GO:0044205">
    <property type="term" value="P:'de novo' UMP biosynthetic process"/>
    <property type="evidence" value="ECO:0007669"/>
    <property type="project" value="UniProtKB-UniRule"/>
</dbReference>
<dbReference type="GO" id="GO:0006520">
    <property type="term" value="P:amino acid metabolic process"/>
    <property type="evidence" value="ECO:0007669"/>
    <property type="project" value="InterPro"/>
</dbReference>
<dbReference type="FunFam" id="3.40.50.1370:FF:000001">
    <property type="entry name" value="Aspartate carbamoyltransferase"/>
    <property type="match status" value="1"/>
</dbReference>
<dbReference type="FunFam" id="3.40.50.1370:FF:000002">
    <property type="entry name" value="Aspartate carbamoyltransferase 2"/>
    <property type="match status" value="1"/>
</dbReference>
<dbReference type="Gene3D" id="3.40.50.1370">
    <property type="entry name" value="Aspartate/ornithine carbamoyltransferase"/>
    <property type="match status" value="2"/>
</dbReference>
<dbReference type="HAMAP" id="MF_00001">
    <property type="entry name" value="Asp_carb_tr"/>
    <property type="match status" value="1"/>
</dbReference>
<dbReference type="InterPro" id="IPR006132">
    <property type="entry name" value="Asp/Orn_carbamoyltranf_P-bd"/>
</dbReference>
<dbReference type="InterPro" id="IPR006130">
    <property type="entry name" value="Asp/Orn_carbamoylTrfase"/>
</dbReference>
<dbReference type="InterPro" id="IPR036901">
    <property type="entry name" value="Asp/Orn_carbamoylTrfase_sf"/>
</dbReference>
<dbReference type="InterPro" id="IPR002082">
    <property type="entry name" value="Asp_carbamoyltransf"/>
</dbReference>
<dbReference type="InterPro" id="IPR006131">
    <property type="entry name" value="Asp_carbamoyltransf_Asp/Orn-bd"/>
</dbReference>
<dbReference type="NCBIfam" id="TIGR00670">
    <property type="entry name" value="asp_carb_tr"/>
    <property type="match status" value="1"/>
</dbReference>
<dbReference type="NCBIfam" id="NF002032">
    <property type="entry name" value="PRK00856.1"/>
    <property type="match status" value="1"/>
</dbReference>
<dbReference type="PANTHER" id="PTHR45753:SF6">
    <property type="entry name" value="ASPARTATE CARBAMOYLTRANSFERASE"/>
    <property type="match status" value="1"/>
</dbReference>
<dbReference type="PANTHER" id="PTHR45753">
    <property type="entry name" value="ORNITHINE CARBAMOYLTRANSFERASE, MITOCHONDRIAL"/>
    <property type="match status" value="1"/>
</dbReference>
<dbReference type="Pfam" id="PF00185">
    <property type="entry name" value="OTCace"/>
    <property type="match status" value="1"/>
</dbReference>
<dbReference type="Pfam" id="PF02729">
    <property type="entry name" value="OTCace_N"/>
    <property type="match status" value="1"/>
</dbReference>
<dbReference type="PRINTS" id="PR00100">
    <property type="entry name" value="AOTCASE"/>
</dbReference>
<dbReference type="PRINTS" id="PR00101">
    <property type="entry name" value="ATCASE"/>
</dbReference>
<dbReference type="SUPFAM" id="SSF53671">
    <property type="entry name" value="Aspartate/ornithine carbamoyltransferase"/>
    <property type="match status" value="1"/>
</dbReference>
<dbReference type="PROSITE" id="PS00097">
    <property type="entry name" value="CARBAMOYLTRANSFERASE"/>
    <property type="match status" value="1"/>
</dbReference>
<keyword id="KW-0665">Pyrimidine biosynthesis</keyword>
<keyword id="KW-1185">Reference proteome</keyword>
<keyword id="KW-0808">Transferase</keyword>